<dbReference type="EMBL" id="CP000029">
    <property type="protein sequence ID" value="AAW54139.1"/>
    <property type="molecule type" value="Genomic_DNA"/>
</dbReference>
<dbReference type="RefSeq" id="WP_002446230.1">
    <property type="nucleotide sequence ID" value="NC_002976.3"/>
</dbReference>
<dbReference type="PDB" id="4M8I">
    <property type="method" value="X-ray"/>
    <property type="resolution" value="1.43 A"/>
    <property type="chains" value="A=2-394"/>
</dbReference>
<dbReference type="PDBsum" id="4M8I"/>
<dbReference type="SMR" id="Q5HQ06"/>
<dbReference type="STRING" id="176279.SERP0751"/>
<dbReference type="KEGG" id="ser:SERP0751"/>
<dbReference type="eggNOG" id="COG0206">
    <property type="taxonomic scope" value="Bacteria"/>
</dbReference>
<dbReference type="HOGENOM" id="CLU_024865_0_1_9"/>
<dbReference type="EvolutionaryTrace" id="Q5HQ06"/>
<dbReference type="Proteomes" id="UP000000531">
    <property type="component" value="Chromosome"/>
</dbReference>
<dbReference type="GO" id="GO:0032153">
    <property type="term" value="C:cell division site"/>
    <property type="evidence" value="ECO:0007669"/>
    <property type="project" value="UniProtKB-UniRule"/>
</dbReference>
<dbReference type="GO" id="GO:0005737">
    <property type="term" value="C:cytoplasm"/>
    <property type="evidence" value="ECO:0007669"/>
    <property type="project" value="UniProtKB-SubCell"/>
</dbReference>
<dbReference type="GO" id="GO:0005525">
    <property type="term" value="F:GTP binding"/>
    <property type="evidence" value="ECO:0007669"/>
    <property type="project" value="UniProtKB-UniRule"/>
</dbReference>
<dbReference type="GO" id="GO:0003924">
    <property type="term" value="F:GTPase activity"/>
    <property type="evidence" value="ECO:0007669"/>
    <property type="project" value="UniProtKB-UniRule"/>
</dbReference>
<dbReference type="GO" id="GO:0000917">
    <property type="term" value="P:division septum assembly"/>
    <property type="evidence" value="ECO:0007669"/>
    <property type="project" value="UniProtKB-KW"/>
</dbReference>
<dbReference type="GO" id="GO:0043093">
    <property type="term" value="P:FtsZ-dependent cytokinesis"/>
    <property type="evidence" value="ECO:0007669"/>
    <property type="project" value="UniProtKB-UniRule"/>
</dbReference>
<dbReference type="GO" id="GO:0051258">
    <property type="term" value="P:protein polymerization"/>
    <property type="evidence" value="ECO:0007669"/>
    <property type="project" value="UniProtKB-UniRule"/>
</dbReference>
<dbReference type="CDD" id="cd02201">
    <property type="entry name" value="FtsZ_type1"/>
    <property type="match status" value="1"/>
</dbReference>
<dbReference type="FunFam" id="3.30.1330.20:FF:000005">
    <property type="entry name" value="Cell division protein FtsZ"/>
    <property type="match status" value="1"/>
</dbReference>
<dbReference type="FunFam" id="3.40.50.1440:FF:000023">
    <property type="entry name" value="Cell division protein FtsZ"/>
    <property type="match status" value="1"/>
</dbReference>
<dbReference type="Gene3D" id="3.30.1330.20">
    <property type="entry name" value="Tubulin/FtsZ, C-terminal domain"/>
    <property type="match status" value="1"/>
</dbReference>
<dbReference type="Gene3D" id="3.40.50.1440">
    <property type="entry name" value="Tubulin/FtsZ, GTPase domain"/>
    <property type="match status" value="1"/>
</dbReference>
<dbReference type="HAMAP" id="MF_00909">
    <property type="entry name" value="FtsZ"/>
    <property type="match status" value="1"/>
</dbReference>
<dbReference type="InterPro" id="IPR000158">
    <property type="entry name" value="Cell_div_FtsZ"/>
</dbReference>
<dbReference type="InterPro" id="IPR020805">
    <property type="entry name" value="Cell_div_FtsZ_CS"/>
</dbReference>
<dbReference type="InterPro" id="IPR045061">
    <property type="entry name" value="FtsZ/CetZ"/>
</dbReference>
<dbReference type="InterPro" id="IPR024757">
    <property type="entry name" value="FtsZ_C"/>
</dbReference>
<dbReference type="InterPro" id="IPR008280">
    <property type="entry name" value="Tub_FtsZ_C"/>
</dbReference>
<dbReference type="InterPro" id="IPR037103">
    <property type="entry name" value="Tubulin/FtsZ-like_C"/>
</dbReference>
<dbReference type="InterPro" id="IPR018316">
    <property type="entry name" value="Tubulin/FtsZ_2-layer-sand-dom"/>
</dbReference>
<dbReference type="InterPro" id="IPR036525">
    <property type="entry name" value="Tubulin/FtsZ_GTPase_sf"/>
</dbReference>
<dbReference type="InterPro" id="IPR003008">
    <property type="entry name" value="Tubulin_FtsZ_GTPase"/>
</dbReference>
<dbReference type="NCBIfam" id="TIGR00065">
    <property type="entry name" value="ftsZ"/>
    <property type="match status" value="1"/>
</dbReference>
<dbReference type="PANTHER" id="PTHR30314">
    <property type="entry name" value="CELL DIVISION PROTEIN FTSZ-RELATED"/>
    <property type="match status" value="1"/>
</dbReference>
<dbReference type="PANTHER" id="PTHR30314:SF3">
    <property type="entry name" value="MITOCHONDRIAL DIVISION PROTEIN FSZA"/>
    <property type="match status" value="1"/>
</dbReference>
<dbReference type="Pfam" id="PF12327">
    <property type="entry name" value="FtsZ_C"/>
    <property type="match status" value="1"/>
</dbReference>
<dbReference type="Pfam" id="PF00091">
    <property type="entry name" value="Tubulin"/>
    <property type="match status" value="1"/>
</dbReference>
<dbReference type="PRINTS" id="PR00423">
    <property type="entry name" value="CELLDVISFTSZ"/>
</dbReference>
<dbReference type="SMART" id="SM00864">
    <property type="entry name" value="Tubulin"/>
    <property type="match status" value="1"/>
</dbReference>
<dbReference type="SMART" id="SM00865">
    <property type="entry name" value="Tubulin_C"/>
    <property type="match status" value="1"/>
</dbReference>
<dbReference type="SUPFAM" id="SSF55307">
    <property type="entry name" value="Tubulin C-terminal domain-like"/>
    <property type="match status" value="1"/>
</dbReference>
<dbReference type="SUPFAM" id="SSF52490">
    <property type="entry name" value="Tubulin nucleotide-binding domain-like"/>
    <property type="match status" value="1"/>
</dbReference>
<dbReference type="PROSITE" id="PS01134">
    <property type="entry name" value="FTSZ_1"/>
    <property type="match status" value="1"/>
</dbReference>
<dbReference type="PROSITE" id="PS01135">
    <property type="entry name" value="FTSZ_2"/>
    <property type="match status" value="1"/>
</dbReference>
<name>FTSZ_STAEQ</name>
<keyword id="KW-0002">3D-structure</keyword>
<keyword id="KW-0131">Cell cycle</keyword>
<keyword id="KW-0132">Cell division</keyword>
<keyword id="KW-0963">Cytoplasm</keyword>
<keyword id="KW-0342">GTP-binding</keyword>
<keyword id="KW-0547">Nucleotide-binding</keyword>
<keyword id="KW-1185">Reference proteome</keyword>
<keyword id="KW-0717">Septation</keyword>
<feature type="chain" id="PRO_0000114387" description="Cell division protein FtsZ">
    <location>
        <begin position="1"/>
        <end position="394"/>
    </location>
</feature>
<feature type="region of interest" description="Disordered" evidence="2">
    <location>
        <begin position="317"/>
        <end position="394"/>
    </location>
</feature>
<feature type="compositionally biased region" description="Low complexity" evidence="2">
    <location>
        <begin position="328"/>
        <end position="346"/>
    </location>
</feature>
<feature type="compositionally biased region" description="Low complexity" evidence="2">
    <location>
        <begin position="353"/>
        <end position="364"/>
    </location>
</feature>
<feature type="compositionally biased region" description="Basic and acidic residues" evidence="2">
    <location>
        <begin position="365"/>
        <end position="388"/>
    </location>
</feature>
<feature type="binding site" evidence="1 3">
    <location>
        <begin position="21"/>
        <end position="25"/>
    </location>
    <ligand>
        <name>GTP</name>
        <dbReference type="ChEBI" id="CHEBI:37565"/>
    </ligand>
</feature>
<feature type="binding site" evidence="3">
    <location>
        <position position="29"/>
    </location>
    <ligand>
        <name>GTP</name>
        <dbReference type="ChEBI" id="CHEBI:37565"/>
    </ligand>
</feature>
<feature type="binding site" evidence="1 3">
    <location>
        <begin position="108"/>
        <end position="110"/>
    </location>
    <ligand>
        <name>GTP</name>
        <dbReference type="ChEBI" id="CHEBI:37565"/>
    </ligand>
</feature>
<feature type="binding site" evidence="1 3">
    <location>
        <position position="139"/>
    </location>
    <ligand>
        <name>GTP</name>
        <dbReference type="ChEBI" id="CHEBI:37565"/>
    </ligand>
</feature>
<feature type="binding site" evidence="1 3">
    <location>
        <position position="143"/>
    </location>
    <ligand>
        <name>GTP</name>
        <dbReference type="ChEBI" id="CHEBI:37565"/>
    </ligand>
</feature>
<feature type="binding site" evidence="3">
    <location>
        <position position="166"/>
    </location>
    <ligand>
        <name>GTP</name>
        <dbReference type="ChEBI" id="CHEBI:37565"/>
    </ligand>
</feature>
<feature type="binding site" evidence="1">
    <location>
        <position position="187"/>
    </location>
    <ligand>
        <name>GTP</name>
        <dbReference type="ChEBI" id="CHEBI:37565"/>
    </ligand>
</feature>
<feature type="strand" evidence="4">
    <location>
        <begin position="14"/>
        <end position="19"/>
    </location>
</feature>
<feature type="helix" evidence="4">
    <location>
        <begin position="20"/>
        <end position="33"/>
    </location>
</feature>
<feature type="strand" evidence="4">
    <location>
        <begin position="39"/>
        <end position="45"/>
    </location>
</feature>
<feature type="helix" evidence="4">
    <location>
        <begin position="47"/>
        <end position="52"/>
    </location>
</feature>
<feature type="strand" evidence="4">
    <location>
        <begin position="56"/>
        <end position="60"/>
    </location>
</feature>
<feature type="helix" evidence="4">
    <location>
        <begin position="63"/>
        <end position="66"/>
    </location>
</feature>
<feature type="helix" evidence="4">
    <location>
        <begin position="75"/>
        <end position="84"/>
    </location>
</feature>
<feature type="helix" evidence="4">
    <location>
        <begin position="86"/>
        <end position="93"/>
    </location>
</feature>
<feature type="strand" evidence="4">
    <location>
        <begin position="97"/>
        <end position="108"/>
    </location>
</feature>
<feature type="helix" evidence="4">
    <location>
        <begin position="109"/>
        <end position="123"/>
    </location>
</feature>
<feature type="strand" evidence="4">
    <location>
        <begin position="127"/>
        <end position="134"/>
    </location>
</feature>
<feature type="helix" evidence="4">
    <location>
        <begin position="137"/>
        <end position="139"/>
    </location>
</feature>
<feature type="helix" evidence="4">
    <location>
        <begin position="141"/>
        <end position="157"/>
    </location>
</feature>
<feature type="strand" evidence="4">
    <location>
        <begin position="159"/>
        <end position="165"/>
    </location>
</feature>
<feature type="helix" evidence="4">
    <location>
        <begin position="166"/>
        <end position="171"/>
    </location>
</feature>
<feature type="helix" evidence="4">
    <location>
        <begin position="179"/>
        <end position="202"/>
    </location>
</feature>
<feature type="helix" evidence="4">
    <location>
        <begin position="211"/>
        <end position="218"/>
    </location>
</feature>
<feature type="strand" evidence="4">
    <location>
        <begin position="225"/>
        <end position="231"/>
    </location>
</feature>
<feature type="helix" evidence="4">
    <location>
        <begin position="236"/>
        <end position="245"/>
    </location>
</feature>
<feature type="strand" evidence="4">
    <location>
        <begin position="259"/>
        <end position="266"/>
    </location>
</feature>
<feature type="helix" evidence="4">
    <location>
        <begin position="272"/>
        <end position="286"/>
    </location>
</feature>
<feature type="strand" evidence="4">
    <location>
        <begin position="291"/>
        <end position="298"/>
    </location>
</feature>
<feature type="strand" evidence="4">
    <location>
        <begin position="306"/>
        <end position="313"/>
    </location>
</feature>
<comment type="function">
    <text evidence="1">Essential cell division protein that forms a contractile ring structure (Z ring) at the future cell division site. The regulation of the ring assembly controls the timing and the location of cell division. One of the functions of the FtsZ ring is to recruit other cell division proteins to the septum to produce a new cell wall between the dividing cells. Binds GTP and shows GTPase activity.</text>
</comment>
<comment type="subunit">
    <text evidence="1">Homodimer. Polymerizes to form a dynamic ring structure in a strictly GTP-dependent manner. Interacts directly with several other division proteins.</text>
</comment>
<comment type="subcellular location">
    <subcellularLocation>
        <location evidence="1">Cytoplasm</location>
    </subcellularLocation>
    <text evidence="1">Assembles at midcell at the inner surface of the cytoplasmic membrane.</text>
</comment>
<comment type="similarity">
    <text evidence="1">Belongs to the FtsZ family.</text>
</comment>
<evidence type="ECO:0000255" key="1">
    <source>
        <dbReference type="HAMAP-Rule" id="MF_00909"/>
    </source>
</evidence>
<evidence type="ECO:0000256" key="2">
    <source>
        <dbReference type="SAM" id="MobiDB-lite"/>
    </source>
</evidence>
<evidence type="ECO:0000269" key="3">
    <source ref="2"/>
</evidence>
<evidence type="ECO:0007829" key="4">
    <source>
        <dbReference type="PDB" id="4M8I"/>
    </source>
</evidence>
<protein>
    <recommendedName>
        <fullName evidence="1">Cell division protein FtsZ</fullName>
    </recommendedName>
</protein>
<accession>Q5HQ06</accession>
<proteinExistence type="evidence at protein level"/>
<sequence>MLEFEQGFNHLATLKVIGVGGGGNNAVNRMIDHGMNNVEFIAINTDGQALNLSKAESKIQIGEKLTRGLGAGANPEIGKKAAEESREQIEDAIQGADMVFVTAGMGGGTGTGAAPVVAKIAKEMGALTVGVVTRPFGFEGRKRQTQAAAGVESMKAAVDTLIVIPNDRLLDIVDKSTPMMEAFKEADNVLRQGVQGISDLIAVSGEVNLDFADVKTIMSNQGSALMGIGVSSGENRAVEAAKKAISSPLLETSIVGAQGVLMNITGGESLSLFEAQEAADIVQDAADEDVNMIFGTVINPELQDEIVVTVIATGFEDKPSSQGRKATSTGFGSSVNSSSNHQSGASAKEDSFSAHTSHSQSSESVSERSHTTKDDDIPSFIRNREERRSRRTRR</sequence>
<organism>
    <name type="scientific">Staphylococcus epidermidis (strain ATCC 35984 / DSM 28319 / BCRC 17069 / CCUG 31568 / BM 3577 / RP62A)</name>
    <dbReference type="NCBI Taxonomy" id="176279"/>
    <lineage>
        <taxon>Bacteria</taxon>
        <taxon>Bacillati</taxon>
        <taxon>Bacillota</taxon>
        <taxon>Bacilli</taxon>
        <taxon>Bacillales</taxon>
        <taxon>Staphylococcaceae</taxon>
        <taxon>Staphylococcus</taxon>
    </lineage>
</organism>
<reference key="1">
    <citation type="journal article" date="2005" name="J. Bacteriol.">
        <title>Insights on evolution of virulence and resistance from the complete genome analysis of an early methicillin-resistant Staphylococcus aureus strain and a biofilm-producing methicillin-resistant Staphylococcus epidermidis strain.</title>
        <authorList>
            <person name="Gill S.R."/>
            <person name="Fouts D.E."/>
            <person name="Archer G.L."/>
            <person name="Mongodin E.F."/>
            <person name="DeBoy R.T."/>
            <person name="Ravel J."/>
            <person name="Paulsen I.T."/>
            <person name="Kolonay J.F."/>
            <person name="Brinkac L.M."/>
            <person name="Beanan M.J."/>
            <person name="Dodson R.J."/>
            <person name="Daugherty S.C."/>
            <person name="Madupu R."/>
            <person name="Angiuoli S.V."/>
            <person name="Durkin A.S."/>
            <person name="Haft D.H."/>
            <person name="Vamathevan J.J."/>
            <person name="Khouri H."/>
            <person name="Utterback T.R."/>
            <person name="Lee C."/>
            <person name="Dimitrov G."/>
            <person name="Jiang L."/>
            <person name="Qin H."/>
            <person name="Weidman J."/>
            <person name="Tran K."/>
            <person name="Kang K.H."/>
            <person name="Hance I.R."/>
            <person name="Nelson K.E."/>
            <person name="Fraser C.M."/>
        </authorList>
    </citation>
    <scope>NUCLEOTIDE SEQUENCE [LARGE SCALE GENOMIC DNA]</scope>
    <source>
        <strain>ATCC 35984 / DSM 28319 / BCRC 17069 / CCUG 31568 / BM 3577 / RP62A</strain>
    </source>
</reference>
<reference key="2">
    <citation type="submission" date="2013-08" db="PDB data bank">
        <title>1.43 Angstrom resolution crystal structure of cell division protein FtsZ (ftsZ) from Staphylococcus epidermidis RP62A in complex with GDP.</title>
        <authorList>
            <person name="Halavaty A.S."/>
            <person name="Minasov G."/>
            <person name="Winsor J."/>
            <person name="Dubrovska I."/>
            <person name="Filippova E.V."/>
            <person name="Olsen D.B."/>
            <person name="Therien A."/>
            <person name="Shuvalova L."/>
            <person name="Young K."/>
            <person name="Anderson W.F."/>
        </authorList>
    </citation>
    <scope>X-RAY CRYSTALLOGRAPHY (1.43 ANGSTROMS) OF 2-394 IN COMPLEX WITH GDP</scope>
    <source>
        <strain>ATCC 35984 / DSM 28319 / BCRC 17069 / CCUG 31568 / BM 3577 / RP62A</strain>
    </source>
</reference>
<gene>
    <name evidence="1" type="primary">ftsZ</name>
    <name type="ordered locus">SERP0751</name>
</gene>